<proteinExistence type="inferred from homology"/>
<organism>
    <name type="scientific">Neisseria lactamica</name>
    <dbReference type="NCBI Taxonomy" id="486"/>
    <lineage>
        <taxon>Bacteria</taxon>
        <taxon>Pseudomonadati</taxon>
        <taxon>Pseudomonadota</taxon>
        <taxon>Betaproteobacteria</taxon>
        <taxon>Neisseriales</taxon>
        <taxon>Neisseriaceae</taxon>
        <taxon>Neisseria</taxon>
    </lineage>
</organism>
<protein>
    <recommendedName>
        <fullName evidence="1">Shikimate dehydrogenase (NADP(+))</fullName>
        <shortName evidence="1">SDH</shortName>
        <ecNumber evidence="1">1.1.1.25</ecNumber>
    </recommendedName>
</protein>
<evidence type="ECO:0000255" key="1">
    <source>
        <dbReference type="HAMAP-Rule" id="MF_00222"/>
    </source>
</evidence>
<keyword id="KW-0028">Amino-acid biosynthesis</keyword>
<keyword id="KW-0057">Aromatic amino acid biosynthesis</keyword>
<keyword id="KW-0521">NADP</keyword>
<keyword id="KW-0560">Oxidoreductase</keyword>
<accession>P95368</accession>
<feature type="chain" id="PRO_0000136018" description="Shikimate dehydrogenase (NADP(+))">
    <location>
        <begin position="1"/>
        <end position="269"/>
    </location>
</feature>
<feature type="active site" description="Proton acceptor" evidence="1">
    <location>
        <position position="68"/>
    </location>
</feature>
<feature type="binding site" evidence="1">
    <location>
        <begin position="17"/>
        <end position="19"/>
    </location>
    <ligand>
        <name>shikimate</name>
        <dbReference type="ChEBI" id="CHEBI:36208"/>
    </ligand>
</feature>
<feature type="binding site" evidence="1">
    <location>
        <position position="64"/>
    </location>
    <ligand>
        <name>shikimate</name>
        <dbReference type="ChEBI" id="CHEBI:36208"/>
    </ligand>
</feature>
<feature type="binding site" evidence="1">
    <location>
        <position position="80"/>
    </location>
    <ligand>
        <name>NADP(+)</name>
        <dbReference type="ChEBI" id="CHEBI:58349"/>
    </ligand>
</feature>
<feature type="binding site" evidence="1">
    <location>
        <position position="89"/>
    </location>
    <ligand>
        <name>shikimate</name>
        <dbReference type="ChEBI" id="CHEBI:36208"/>
    </ligand>
</feature>
<feature type="binding site" evidence="1">
    <location>
        <position position="105"/>
    </location>
    <ligand>
        <name>shikimate</name>
        <dbReference type="ChEBI" id="CHEBI:36208"/>
    </ligand>
</feature>
<feature type="binding site" evidence="1">
    <location>
        <begin position="130"/>
        <end position="134"/>
    </location>
    <ligand>
        <name>NADP(+)</name>
        <dbReference type="ChEBI" id="CHEBI:58349"/>
    </ligand>
</feature>
<feature type="binding site" evidence="1">
    <location>
        <begin position="154"/>
        <end position="159"/>
    </location>
    <ligand>
        <name>NADP(+)</name>
        <dbReference type="ChEBI" id="CHEBI:58349"/>
    </ligand>
</feature>
<feature type="binding site" evidence="1">
    <location>
        <position position="213"/>
    </location>
    <ligand>
        <name>NADP(+)</name>
        <dbReference type="ChEBI" id="CHEBI:58349"/>
    </ligand>
</feature>
<feature type="binding site" evidence="1">
    <location>
        <position position="215"/>
    </location>
    <ligand>
        <name>shikimate</name>
        <dbReference type="ChEBI" id="CHEBI:36208"/>
    </ligand>
</feature>
<feature type="binding site" evidence="1">
    <location>
        <position position="237"/>
    </location>
    <ligand>
        <name>NADP(+)</name>
        <dbReference type="ChEBI" id="CHEBI:58349"/>
    </ligand>
</feature>
<dbReference type="EC" id="1.1.1.25" evidence="1"/>
<dbReference type="EMBL" id="U82843">
    <property type="protein sequence ID" value="AAC44914.1"/>
    <property type="molecule type" value="Genomic_DNA"/>
</dbReference>
<dbReference type="RefSeq" id="WP_003711177.1">
    <property type="nucleotide sequence ID" value="NZ_LR590477.1"/>
</dbReference>
<dbReference type="SMR" id="P95368"/>
<dbReference type="STRING" id="486.B2G52_00395"/>
<dbReference type="UniPathway" id="UPA00053">
    <property type="reaction ID" value="UER00087"/>
</dbReference>
<dbReference type="GO" id="GO:0005829">
    <property type="term" value="C:cytosol"/>
    <property type="evidence" value="ECO:0007669"/>
    <property type="project" value="TreeGrafter"/>
</dbReference>
<dbReference type="GO" id="GO:0050661">
    <property type="term" value="F:NADP binding"/>
    <property type="evidence" value="ECO:0007669"/>
    <property type="project" value="InterPro"/>
</dbReference>
<dbReference type="GO" id="GO:0004764">
    <property type="term" value="F:shikimate 3-dehydrogenase (NADP+) activity"/>
    <property type="evidence" value="ECO:0007669"/>
    <property type="project" value="UniProtKB-UniRule"/>
</dbReference>
<dbReference type="GO" id="GO:0008652">
    <property type="term" value="P:amino acid biosynthetic process"/>
    <property type="evidence" value="ECO:0007669"/>
    <property type="project" value="UniProtKB-KW"/>
</dbReference>
<dbReference type="GO" id="GO:0009073">
    <property type="term" value="P:aromatic amino acid family biosynthetic process"/>
    <property type="evidence" value="ECO:0007669"/>
    <property type="project" value="UniProtKB-KW"/>
</dbReference>
<dbReference type="GO" id="GO:0009423">
    <property type="term" value="P:chorismate biosynthetic process"/>
    <property type="evidence" value="ECO:0007669"/>
    <property type="project" value="UniProtKB-UniRule"/>
</dbReference>
<dbReference type="GO" id="GO:0019632">
    <property type="term" value="P:shikimate metabolic process"/>
    <property type="evidence" value="ECO:0007669"/>
    <property type="project" value="InterPro"/>
</dbReference>
<dbReference type="CDD" id="cd01065">
    <property type="entry name" value="NAD_bind_Shikimate_DH"/>
    <property type="match status" value="1"/>
</dbReference>
<dbReference type="FunFam" id="3.40.50.10860:FF:000006">
    <property type="entry name" value="Shikimate dehydrogenase (NADP(+))"/>
    <property type="match status" value="1"/>
</dbReference>
<dbReference type="Gene3D" id="3.40.50.10860">
    <property type="entry name" value="Leucine Dehydrogenase, chain A, domain 1"/>
    <property type="match status" value="1"/>
</dbReference>
<dbReference type="Gene3D" id="3.40.50.720">
    <property type="entry name" value="NAD(P)-binding Rossmann-like Domain"/>
    <property type="match status" value="1"/>
</dbReference>
<dbReference type="HAMAP" id="MF_00222">
    <property type="entry name" value="Shikimate_DH_AroE"/>
    <property type="match status" value="1"/>
</dbReference>
<dbReference type="InterPro" id="IPR046346">
    <property type="entry name" value="Aminoacid_DH-like_N_sf"/>
</dbReference>
<dbReference type="InterPro" id="IPR036291">
    <property type="entry name" value="NAD(P)-bd_dom_sf"/>
</dbReference>
<dbReference type="InterPro" id="IPR041121">
    <property type="entry name" value="SDH_C"/>
</dbReference>
<dbReference type="InterPro" id="IPR011342">
    <property type="entry name" value="Shikimate_DH"/>
</dbReference>
<dbReference type="InterPro" id="IPR013708">
    <property type="entry name" value="Shikimate_DH-bd_N"/>
</dbReference>
<dbReference type="InterPro" id="IPR022893">
    <property type="entry name" value="Shikimate_DH_fam"/>
</dbReference>
<dbReference type="InterPro" id="IPR006151">
    <property type="entry name" value="Shikm_DH/Glu-tRNA_Rdtase"/>
</dbReference>
<dbReference type="NCBIfam" id="TIGR00507">
    <property type="entry name" value="aroE"/>
    <property type="match status" value="1"/>
</dbReference>
<dbReference type="NCBIfam" id="NF001310">
    <property type="entry name" value="PRK00258.1-2"/>
    <property type="match status" value="1"/>
</dbReference>
<dbReference type="PANTHER" id="PTHR21089:SF1">
    <property type="entry name" value="BIFUNCTIONAL 3-DEHYDROQUINATE DEHYDRATASE_SHIKIMATE DEHYDROGENASE, CHLOROPLASTIC"/>
    <property type="match status" value="1"/>
</dbReference>
<dbReference type="PANTHER" id="PTHR21089">
    <property type="entry name" value="SHIKIMATE DEHYDROGENASE"/>
    <property type="match status" value="1"/>
</dbReference>
<dbReference type="Pfam" id="PF18317">
    <property type="entry name" value="SDH_C"/>
    <property type="match status" value="1"/>
</dbReference>
<dbReference type="Pfam" id="PF01488">
    <property type="entry name" value="Shikimate_DH"/>
    <property type="match status" value="1"/>
</dbReference>
<dbReference type="Pfam" id="PF08501">
    <property type="entry name" value="Shikimate_dh_N"/>
    <property type="match status" value="1"/>
</dbReference>
<dbReference type="SUPFAM" id="SSF53223">
    <property type="entry name" value="Aminoacid dehydrogenase-like, N-terminal domain"/>
    <property type="match status" value="1"/>
</dbReference>
<dbReference type="SUPFAM" id="SSF51735">
    <property type="entry name" value="NAD(P)-binding Rossmann-fold domains"/>
    <property type="match status" value="1"/>
</dbReference>
<gene>
    <name evidence="1" type="primary">aroE</name>
</gene>
<reference key="1">
    <citation type="journal article" date="1997" name="Mol. Microbiol.">
        <title>Interspecies recombination, and phylogenetic distortions, within the glutamine synthetase and shikimate dehydrogenase genes of Neisseria meningitidis and commensal Neisseria species.</title>
        <authorList>
            <person name="Zhou J."/>
            <person name="Bowler L.D."/>
            <person name="Spratt B.G."/>
        </authorList>
    </citation>
    <scope>NUCLEOTIDE SEQUENCE [GENOMIC DNA]</scope>
    <source>
        <strain>ATCC 23970 / DSM 4691 / CCUG 5853 / CIP 72.17 / NCTC 10617 / NCDC A7515</strain>
    </source>
</reference>
<name>AROE_NEILA</name>
<sequence>MTALPRYAVFGNPVAHSKSPQIHRQFALQEGVEIEYGRICADIGSFAQAVSTFFGTGGCGANVTVPFKQEAFDLADEHSERASAAGAVNTLILLENGKLRGDNTDGLGLVGDIVKVQNTEVEGKNILLLGAGGAVRGVIPVLLAQNPARIVIANRTRAKAEEVAARFGIEAVPMADLNGGFDIIINGTSGGLNGQIPDIPPDIFQNCALAYDMVYGEAAKPFLDFARQSGAKQTADGLGMLVGQAAASYALWRGFKPDIRPVIEYMKAL</sequence>
<comment type="function">
    <text evidence="1">Involved in the biosynthesis of the chorismate, which leads to the biosynthesis of aromatic amino acids. Catalyzes the reversible NADPH linked reduction of 3-dehydroshikimate (DHSA) to yield shikimate (SA).</text>
</comment>
<comment type="catalytic activity">
    <reaction evidence="1">
        <text>shikimate + NADP(+) = 3-dehydroshikimate + NADPH + H(+)</text>
        <dbReference type="Rhea" id="RHEA:17737"/>
        <dbReference type="ChEBI" id="CHEBI:15378"/>
        <dbReference type="ChEBI" id="CHEBI:16630"/>
        <dbReference type="ChEBI" id="CHEBI:36208"/>
        <dbReference type="ChEBI" id="CHEBI:57783"/>
        <dbReference type="ChEBI" id="CHEBI:58349"/>
        <dbReference type="EC" id="1.1.1.25"/>
    </reaction>
</comment>
<comment type="pathway">
    <text evidence="1">Metabolic intermediate biosynthesis; chorismate biosynthesis; chorismate from D-erythrose 4-phosphate and phosphoenolpyruvate: step 4/7.</text>
</comment>
<comment type="subunit">
    <text evidence="1">Homodimer.</text>
</comment>
<comment type="similarity">
    <text evidence="1">Belongs to the shikimate dehydrogenase family.</text>
</comment>